<proteinExistence type="inferred from homology"/>
<keyword id="KW-0997">Cell inner membrane</keyword>
<keyword id="KW-1003">Cell membrane</keyword>
<keyword id="KW-0249">Electron transport</keyword>
<keyword id="KW-0285">Flavoprotein</keyword>
<keyword id="KW-0288">FMN</keyword>
<keyword id="KW-0472">Membrane</keyword>
<keyword id="KW-0597">Phosphoprotein</keyword>
<keyword id="KW-1278">Translocase</keyword>
<keyword id="KW-0812">Transmembrane</keyword>
<keyword id="KW-1133">Transmembrane helix</keyword>
<keyword id="KW-0813">Transport</keyword>
<sequence>MALVQQSSPHARRARPTSRVMLWVILAALPGLLAQTLFFGWGNLINVVWCIALALGSEAAFLKLRGKPVAFFLRDNTAAVTGLLLGLSLPQFTPWWVSGIAVVSAIVVAKQLYGGLGSNPFNPAMVGYALALISFPVAMTTNWAEAATLWGGAPGFGETLAKIFTGGQTAVDGWTMATPLDEYKHKIASHTSVEVLGHPTFGDLIARGWEWVNLAFLAGGVLLIALRIITWHIPVAFLAGIAAMSLAFGSNADQYAPLQLHLLAGGTMLGAFFIATDPVSAATSHQGKLIYGAGIGVLVYLIRSWGNYPDAVAFSVLLMNFAVPFIDHYTPPRTYGHHKARRGVPGRSGG</sequence>
<accession>A1TZ62</accession>
<protein>
    <recommendedName>
        <fullName evidence="1">Ion-translocating oxidoreductase complex subunit D</fullName>
        <ecNumber evidence="1">7.-.-.-</ecNumber>
    </recommendedName>
    <alternativeName>
        <fullName evidence="1">Rnf electron transport complex subunit D</fullName>
    </alternativeName>
</protein>
<comment type="function">
    <text evidence="1">Part of a membrane-bound complex that couples electron transfer with translocation of ions across the membrane.</text>
</comment>
<comment type="cofactor">
    <cofactor evidence="1">
        <name>FMN</name>
        <dbReference type="ChEBI" id="CHEBI:58210"/>
    </cofactor>
</comment>
<comment type="subunit">
    <text evidence="1">The complex is composed of six subunits: RnfA, RnfB, RnfC, RnfD, RnfE and RnfG.</text>
</comment>
<comment type="subcellular location">
    <subcellularLocation>
        <location evidence="1">Cell inner membrane</location>
        <topology evidence="1">Multi-pass membrane protein</topology>
    </subcellularLocation>
</comment>
<comment type="similarity">
    <text evidence="1">Belongs to the NqrB/RnfD family.</text>
</comment>
<name>RNFD_MARN8</name>
<feature type="chain" id="PRO_1000125389" description="Ion-translocating oxidoreductase complex subunit D">
    <location>
        <begin position="1"/>
        <end position="350"/>
    </location>
</feature>
<feature type="transmembrane region" description="Helical" evidence="1">
    <location>
        <begin position="20"/>
        <end position="40"/>
    </location>
</feature>
<feature type="transmembrane region" description="Helical" evidence="1">
    <location>
        <begin position="42"/>
        <end position="62"/>
    </location>
</feature>
<feature type="transmembrane region" description="Helical" evidence="1">
    <location>
        <begin position="89"/>
        <end position="109"/>
    </location>
</feature>
<feature type="transmembrane region" description="Helical" evidence="1">
    <location>
        <begin position="120"/>
        <end position="140"/>
    </location>
</feature>
<feature type="transmembrane region" description="Helical" evidence="1">
    <location>
        <begin position="204"/>
        <end position="224"/>
    </location>
</feature>
<feature type="transmembrane region" description="Helical" evidence="1">
    <location>
        <begin position="228"/>
        <end position="248"/>
    </location>
</feature>
<feature type="transmembrane region" description="Helical" evidence="1">
    <location>
        <begin position="255"/>
        <end position="275"/>
    </location>
</feature>
<feature type="transmembrane region" description="Helical" evidence="1">
    <location>
        <begin position="282"/>
        <end position="302"/>
    </location>
</feature>
<feature type="transmembrane region" description="Helical" evidence="1">
    <location>
        <begin position="306"/>
        <end position="326"/>
    </location>
</feature>
<feature type="modified residue" description="FMN phosphoryl threonine" evidence="1">
    <location>
        <position position="178"/>
    </location>
</feature>
<organism>
    <name type="scientific">Marinobacter nauticus (strain ATCC 700491 / DSM 11845 / VT8)</name>
    <name type="common">Marinobacter aquaeolei</name>
    <dbReference type="NCBI Taxonomy" id="351348"/>
    <lineage>
        <taxon>Bacteria</taxon>
        <taxon>Pseudomonadati</taxon>
        <taxon>Pseudomonadota</taxon>
        <taxon>Gammaproteobacteria</taxon>
        <taxon>Pseudomonadales</taxon>
        <taxon>Marinobacteraceae</taxon>
        <taxon>Marinobacter</taxon>
    </lineage>
</organism>
<reference key="1">
    <citation type="journal article" date="2011" name="Appl. Environ. Microbiol.">
        <title>Genomic potential of Marinobacter aquaeolei, a biogeochemical 'opportunitroph'.</title>
        <authorList>
            <person name="Singer E."/>
            <person name="Webb E.A."/>
            <person name="Nelson W.C."/>
            <person name="Heidelberg J.F."/>
            <person name="Ivanova N."/>
            <person name="Pati A."/>
            <person name="Edwards K.J."/>
        </authorList>
    </citation>
    <scope>NUCLEOTIDE SEQUENCE [LARGE SCALE GENOMIC DNA]</scope>
    <source>
        <strain>ATCC 700491 / DSM 11845 / VT8</strain>
    </source>
</reference>
<evidence type="ECO:0000255" key="1">
    <source>
        <dbReference type="HAMAP-Rule" id="MF_00462"/>
    </source>
</evidence>
<gene>
    <name evidence="1" type="primary">rnfD</name>
    <name type="ordered locus">Maqu_0935</name>
</gene>
<dbReference type="EC" id="7.-.-.-" evidence="1"/>
<dbReference type="EMBL" id="CP000514">
    <property type="protein sequence ID" value="ABM18031.1"/>
    <property type="molecule type" value="Genomic_DNA"/>
</dbReference>
<dbReference type="SMR" id="A1TZ62"/>
<dbReference type="STRING" id="351348.Maqu_0935"/>
<dbReference type="KEGG" id="maq:Maqu_0935"/>
<dbReference type="eggNOG" id="COG4658">
    <property type="taxonomic scope" value="Bacteria"/>
</dbReference>
<dbReference type="HOGENOM" id="CLU_042020_0_0_6"/>
<dbReference type="OrthoDB" id="9776359at2"/>
<dbReference type="Proteomes" id="UP000000998">
    <property type="component" value="Chromosome"/>
</dbReference>
<dbReference type="GO" id="GO:0005886">
    <property type="term" value="C:plasma membrane"/>
    <property type="evidence" value="ECO:0007669"/>
    <property type="project" value="UniProtKB-SubCell"/>
</dbReference>
<dbReference type="GO" id="GO:0022900">
    <property type="term" value="P:electron transport chain"/>
    <property type="evidence" value="ECO:0007669"/>
    <property type="project" value="UniProtKB-UniRule"/>
</dbReference>
<dbReference type="GO" id="GO:0055085">
    <property type="term" value="P:transmembrane transport"/>
    <property type="evidence" value="ECO:0007669"/>
    <property type="project" value="InterPro"/>
</dbReference>
<dbReference type="HAMAP" id="MF_00462">
    <property type="entry name" value="RsxD_RnfD"/>
    <property type="match status" value="1"/>
</dbReference>
<dbReference type="InterPro" id="IPR004338">
    <property type="entry name" value="NqrB/RnfD"/>
</dbReference>
<dbReference type="InterPro" id="IPR011303">
    <property type="entry name" value="RnfD_bac"/>
</dbReference>
<dbReference type="NCBIfam" id="NF002011">
    <property type="entry name" value="PRK00816.1"/>
    <property type="match status" value="1"/>
</dbReference>
<dbReference type="NCBIfam" id="TIGR01946">
    <property type="entry name" value="rnfD"/>
    <property type="match status" value="1"/>
</dbReference>
<dbReference type="PANTHER" id="PTHR30578">
    <property type="entry name" value="ELECTRON TRANSPORT COMPLEX PROTEIN RNFD"/>
    <property type="match status" value="1"/>
</dbReference>
<dbReference type="PANTHER" id="PTHR30578:SF0">
    <property type="entry name" value="ION-TRANSLOCATING OXIDOREDUCTASE COMPLEX SUBUNIT D"/>
    <property type="match status" value="1"/>
</dbReference>
<dbReference type="Pfam" id="PF03116">
    <property type="entry name" value="NQR2_RnfD_RnfE"/>
    <property type="match status" value="1"/>
</dbReference>